<proteinExistence type="inferred from homology"/>
<gene>
    <name evidence="1" type="primary">trmD</name>
    <name type="ordered locus">Blon_0350</name>
    <name type="ordered locus">BLIJ_0357</name>
</gene>
<feature type="chain" id="PRO_1000147074" description="tRNA (guanine-N(1)-)-methyltransferase">
    <location>
        <begin position="1"/>
        <end position="271"/>
    </location>
</feature>
<feature type="binding site" evidence="1">
    <location>
        <position position="120"/>
    </location>
    <ligand>
        <name>S-adenosyl-L-methionine</name>
        <dbReference type="ChEBI" id="CHEBI:59789"/>
    </ligand>
</feature>
<feature type="binding site" evidence="1">
    <location>
        <begin position="145"/>
        <end position="150"/>
    </location>
    <ligand>
        <name>S-adenosyl-L-methionine</name>
        <dbReference type="ChEBI" id="CHEBI:59789"/>
    </ligand>
</feature>
<comment type="function">
    <text evidence="1">Specifically methylates guanosine-37 in various tRNAs.</text>
</comment>
<comment type="catalytic activity">
    <reaction evidence="1">
        <text>guanosine(37) in tRNA + S-adenosyl-L-methionine = N(1)-methylguanosine(37) in tRNA + S-adenosyl-L-homocysteine + H(+)</text>
        <dbReference type="Rhea" id="RHEA:36899"/>
        <dbReference type="Rhea" id="RHEA-COMP:10145"/>
        <dbReference type="Rhea" id="RHEA-COMP:10147"/>
        <dbReference type="ChEBI" id="CHEBI:15378"/>
        <dbReference type="ChEBI" id="CHEBI:57856"/>
        <dbReference type="ChEBI" id="CHEBI:59789"/>
        <dbReference type="ChEBI" id="CHEBI:73542"/>
        <dbReference type="ChEBI" id="CHEBI:74269"/>
        <dbReference type="EC" id="2.1.1.228"/>
    </reaction>
</comment>
<comment type="subunit">
    <text evidence="1">Homodimer.</text>
</comment>
<comment type="subcellular location">
    <subcellularLocation>
        <location evidence="1">Cytoplasm</location>
    </subcellularLocation>
</comment>
<comment type="similarity">
    <text evidence="1">Belongs to the RNA methyltransferase TrmD family.</text>
</comment>
<protein>
    <recommendedName>
        <fullName evidence="1">tRNA (guanine-N(1)-)-methyltransferase</fullName>
        <ecNumber evidence="1">2.1.1.228</ecNumber>
    </recommendedName>
    <alternativeName>
        <fullName evidence="1">M1G-methyltransferase</fullName>
    </alternativeName>
    <alternativeName>
        <fullName evidence="1">tRNA [GM37] methyltransferase</fullName>
    </alternativeName>
</protein>
<organism>
    <name type="scientific">Bifidobacterium longum subsp. infantis (strain ATCC 15697 / DSM 20088 / JCM 1222 / NCTC 11817 / S12)</name>
    <dbReference type="NCBI Taxonomy" id="391904"/>
    <lineage>
        <taxon>Bacteria</taxon>
        <taxon>Bacillati</taxon>
        <taxon>Actinomycetota</taxon>
        <taxon>Actinomycetes</taxon>
        <taxon>Bifidobacteriales</taxon>
        <taxon>Bifidobacteriaceae</taxon>
        <taxon>Bifidobacterium</taxon>
    </lineage>
</organism>
<name>TRMD_BIFLS</name>
<reference key="1">
    <citation type="journal article" date="2008" name="Proc. Natl. Acad. Sci. U.S.A.">
        <title>The genome sequence of Bifidobacterium longum subsp. infantis reveals adaptations for milk utilization within the infant microbiome.</title>
        <authorList>
            <person name="Sela D.A."/>
            <person name="Chapman J."/>
            <person name="Adeuya A."/>
            <person name="Kim J.H."/>
            <person name="Chen F."/>
            <person name="Whitehead T.R."/>
            <person name="Lapidus A."/>
            <person name="Rokhsar D.S."/>
            <person name="Lebrilla C.B."/>
            <person name="German J.B."/>
            <person name="Price N.P."/>
            <person name="Richardson P.M."/>
            <person name="Mills D.A."/>
        </authorList>
    </citation>
    <scope>NUCLEOTIDE SEQUENCE [LARGE SCALE GENOMIC DNA]</scope>
    <source>
        <strain>ATCC 15697 / DSM 20088 / JCM 1222 / NCTC 11817 / S12</strain>
    </source>
</reference>
<reference key="2">
    <citation type="journal article" date="2011" name="Nature">
        <title>Bifidobacteria can protect from enteropathogenic infection through production of acetate.</title>
        <authorList>
            <person name="Fukuda S."/>
            <person name="Toh H."/>
            <person name="Hase K."/>
            <person name="Oshima K."/>
            <person name="Nakanishi Y."/>
            <person name="Yoshimura K."/>
            <person name="Tobe T."/>
            <person name="Clarke J.M."/>
            <person name="Topping D.L."/>
            <person name="Suzuki T."/>
            <person name="Taylor T.D."/>
            <person name="Itoh K."/>
            <person name="Kikuchi J."/>
            <person name="Morita H."/>
            <person name="Hattori M."/>
            <person name="Ohno H."/>
        </authorList>
    </citation>
    <scope>NUCLEOTIDE SEQUENCE [LARGE SCALE GENOMIC DNA]</scope>
    <source>
        <strain>ATCC 15697 / DSM 20088 / JCM 1222 / NCTC 11817 / S12</strain>
    </source>
</reference>
<keyword id="KW-0963">Cytoplasm</keyword>
<keyword id="KW-0489">Methyltransferase</keyword>
<keyword id="KW-0949">S-adenosyl-L-methionine</keyword>
<keyword id="KW-0808">Transferase</keyword>
<keyword id="KW-0819">tRNA processing</keyword>
<dbReference type="EC" id="2.1.1.228" evidence="1"/>
<dbReference type="EMBL" id="CP001095">
    <property type="protein sequence ID" value="ACJ51474.1"/>
    <property type="molecule type" value="Genomic_DNA"/>
</dbReference>
<dbReference type="EMBL" id="AP010889">
    <property type="protein sequence ID" value="BAJ67951.1"/>
    <property type="molecule type" value="Genomic_DNA"/>
</dbReference>
<dbReference type="RefSeq" id="WP_012576781.1">
    <property type="nucleotide sequence ID" value="NZ_JDTT01000012.1"/>
</dbReference>
<dbReference type="SMR" id="B7GMW8"/>
<dbReference type="KEGG" id="bln:Blon_0350"/>
<dbReference type="KEGG" id="blon:BLIJ_0357"/>
<dbReference type="PATRIC" id="fig|391904.8.peg.361"/>
<dbReference type="HOGENOM" id="CLU_047363_0_0_11"/>
<dbReference type="Proteomes" id="UP000001360">
    <property type="component" value="Chromosome"/>
</dbReference>
<dbReference type="GO" id="GO:0005829">
    <property type="term" value="C:cytosol"/>
    <property type="evidence" value="ECO:0007669"/>
    <property type="project" value="TreeGrafter"/>
</dbReference>
<dbReference type="GO" id="GO:0052906">
    <property type="term" value="F:tRNA (guanine(37)-N1)-methyltransferase activity"/>
    <property type="evidence" value="ECO:0007669"/>
    <property type="project" value="UniProtKB-UniRule"/>
</dbReference>
<dbReference type="GO" id="GO:0002939">
    <property type="term" value="P:tRNA N1-guanine methylation"/>
    <property type="evidence" value="ECO:0007669"/>
    <property type="project" value="TreeGrafter"/>
</dbReference>
<dbReference type="CDD" id="cd18080">
    <property type="entry name" value="TrmD-like"/>
    <property type="match status" value="1"/>
</dbReference>
<dbReference type="FunFam" id="1.10.1270.20:FF:000002">
    <property type="entry name" value="tRNA (guanine-N(1)-)-methyltransferase"/>
    <property type="match status" value="1"/>
</dbReference>
<dbReference type="Gene3D" id="3.40.1280.10">
    <property type="match status" value="1"/>
</dbReference>
<dbReference type="Gene3D" id="1.10.1270.20">
    <property type="entry name" value="tRNA(m1g37)methyltransferase, domain 2"/>
    <property type="match status" value="1"/>
</dbReference>
<dbReference type="HAMAP" id="MF_00605">
    <property type="entry name" value="TrmD"/>
    <property type="match status" value="1"/>
</dbReference>
<dbReference type="InterPro" id="IPR029028">
    <property type="entry name" value="Alpha/beta_knot_MTases"/>
</dbReference>
<dbReference type="InterPro" id="IPR023148">
    <property type="entry name" value="tRNA_m1G_MeTrfase_C_sf"/>
</dbReference>
<dbReference type="InterPro" id="IPR002649">
    <property type="entry name" value="tRNA_m1G_MeTrfase_TrmD"/>
</dbReference>
<dbReference type="InterPro" id="IPR029026">
    <property type="entry name" value="tRNA_m1G_MTases_N"/>
</dbReference>
<dbReference type="InterPro" id="IPR016009">
    <property type="entry name" value="tRNA_MeTrfase_TRMD/TRM10"/>
</dbReference>
<dbReference type="NCBIfam" id="NF000648">
    <property type="entry name" value="PRK00026.1"/>
    <property type="match status" value="1"/>
</dbReference>
<dbReference type="NCBIfam" id="TIGR00088">
    <property type="entry name" value="trmD"/>
    <property type="match status" value="1"/>
</dbReference>
<dbReference type="PANTHER" id="PTHR46417">
    <property type="entry name" value="TRNA (GUANINE-N(1)-)-METHYLTRANSFERASE"/>
    <property type="match status" value="1"/>
</dbReference>
<dbReference type="PANTHER" id="PTHR46417:SF1">
    <property type="entry name" value="TRNA (GUANINE-N(1)-)-METHYLTRANSFERASE"/>
    <property type="match status" value="1"/>
</dbReference>
<dbReference type="Pfam" id="PF01746">
    <property type="entry name" value="tRNA_m1G_MT"/>
    <property type="match status" value="1"/>
</dbReference>
<dbReference type="PIRSF" id="PIRSF000386">
    <property type="entry name" value="tRNA_mtase"/>
    <property type="match status" value="1"/>
</dbReference>
<dbReference type="SUPFAM" id="SSF75217">
    <property type="entry name" value="alpha/beta knot"/>
    <property type="match status" value="1"/>
</dbReference>
<accession>B7GMW8</accession>
<accession>E8MPC7</accession>
<sequence>MKIDIVSVFPEYFEVMNLSLMGKAQAKGLLEIKAHNLRDWTHDVHHSVDDTPVGGGAGMVMKPEVWSECLDELLGFSRPSDSSAPSGTPVLIFPNPSAPLFTQRDATELSHADHLLFGCGRYEGYDARIPDYYRSQGVDVREYSIGDYVLNGGEVAVSVMLEAITRLMPGFMGNPDSIVEESYTGEGALLEHRQYTKPAVWRGIAVPDVLLSGDHGKVDRFRRDEALARTAEIRPDLIAALDCKALDKADRKTLMALGWEVSAAHPRRLAD</sequence>
<evidence type="ECO:0000255" key="1">
    <source>
        <dbReference type="HAMAP-Rule" id="MF_00605"/>
    </source>
</evidence>